<gene>
    <name evidence="6" type="primary">orsB</name>
    <name type="ORF">AN7911</name>
</gene>
<keyword id="KW-0210">Decarboxylase</keyword>
<keyword id="KW-0456">Lyase</keyword>
<keyword id="KW-0479">Metal-binding</keyword>
<keyword id="KW-1185">Reference proteome</keyword>
<keyword id="KW-0862">Zinc</keyword>
<name>ORSB_EMENI</name>
<comment type="function">
    <text evidence="2 3">Decarboxylase; part of the gene cluster that mediates the biosynthesis of orsellinic acid, as well as of the cathepsin K inhibitors F9775 A and F9775 B (PubMed:19666480, PubMed:20174687). The non-reducing polyketide synthase orsA produces orsellinic acid by condensing acetyl-CoA with 3 malonyl-CoA units (PubMed:19666480, PubMed:20174687). Further modifications by the decarboxylase orsB and the tyrosinase-like protein orsC lead to the production of F9775 A and F9775 B (PubMed:20174687). The functions of orsD and orsE remain unclear since only orsB and orsC are required to convert orsellinic acid into F9775 A and F9775 B (PubMed:20174687).</text>
</comment>
<comment type="pathway">
    <text evidence="3">Secondary metabolite biosynthesis.</text>
</comment>
<comment type="induction">
    <text evidence="2 4 5">Expression is induced by an intimate physical interaction of the fungal mycelia with the bacterium Streptomyces hygroscopicus (PubMed:19666480). Expression is repressed by VeA and MvlA via histone 3 acetylation by the SAGA/ADA complex (PubMed:23841751, PubMed:23892751).</text>
</comment>
<comment type="disruption phenotype">
    <text evidence="3">Fails to produce F9775 A and B, but accumulates gerfelin and continues to yield orsellinic acid (PubMed:20174687).</text>
</comment>
<comment type="similarity">
    <text evidence="8">Belongs to the metallo-dependent hydrolases superfamily. ACMSD family.</text>
</comment>
<proteinExistence type="evidence at transcript level"/>
<evidence type="ECO:0000250" key="1">
    <source>
        <dbReference type="UniProtKB" id="Q8TDX5"/>
    </source>
</evidence>
<evidence type="ECO:0000269" key="2">
    <source>
    </source>
</evidence>
<evidence type="ECO:0000269" key="3">
    <source>
    </source>
</evidence>
<evidence type="ECO:0000269" key="4">
    <source>
    </source>
</evidence>
<evidence type="ECO:0000269" key="5">
    <source>
    </source>
</evidence>
<evidence type="ECO:0000303" key="6">
    <source>
    </source>
</evidence>
<evidence type="ECO:0000303" key="7">
    <source>
    </source>
</evidence>
<evidence type="ECO:0000305" key="8"/>
<evidence type="ECO:0000305" key="9">
    <source>
    </source>
</evidence>
<feature type="chain" id="PRO_0000438578" description="Decarboxylase orsB">
    <location>
        <begin position="1"/>
        <end position="331"/>
    </location>
</feature>
<feature type="binding site" evidence="1">
    <location>
        <position position="11"/>
    </location>
    <ligand>
        <name>Zn(2+)</name>
        <dbReference type="ChEBI" id="CHEBI:29105"/>
    </ligand>
</feature>
<feature type="binding site" evidence="1">
    <location>
        <position position="157"/>
    </location>
    <ligand>
        <name>Zn(2+)</name>
        <dbReference type="ChEBI" id="CHEBI:29105"/>
    </ligand>
</feature>
<feature type="binding site" evidence="1">
    <location>
        <position position="284"/>
    </location>
    <ligand>
        <name>Zn(2+)</name>
        <dbReference type="ChEBI" id="CHEBI:29105"/>
    </ligand>
</feature>
<sequence>MTPPLLALEEHYYSTAIFNSIGETFQRTLQGVPGLADQLRSLGDGRLEAMNRGNISLQVVSHAFTPGGPSAEACRAGNDELAAEIAQISDPQRFAAFAVLPVADPTASAAELDRSVSELGFVGALIDNHADGKHFDGHDYDVLWAKACELDVPIYLHPTWPSARMAENFMGSYPVPVGISLGGPGWGWHPDVGLHVLKLFAAGVFDRFPRLKIIVGHMGEMLPYMLERASDMSTRWGGWGPRDRPLRQVWDENIWITTSGSWSLAPLKCILHNTKVERIMYSVDYPFESNERGLEWFKELEGSGLLTEEQLEMVAYRNAEDLLKVHMKKEQ</sequence>
<organism>
    <name type="scientific">Emericella nidulans (strain FGSC A4 / ATCC 38163 / CBS 112.46 / NRRL 194 / M139)</name>
    <name type="common">Aspergillus nidulans</name>
    <dbReference type="NCBI Taxonomy" id="227321"/>
    <lineage>
        <taxon>Eukaryota</taxon>
        <taxon>Fungi</taxon>
        <taxon>Dikarya</taxon>
        <taxon>Ascomycota</taxon>
        <taxon>Pezizomycotina</taxon>
        <taxon>Eurotiomycetes</taxon>
        <taxon>Eurotiomycetidae</taxon>
        <taxon>Eurotiales</taxon>
        <taxon>Aspergillaceae</taxon>
        <taxon>Aspergillus</taxon>
        <taxon>Aspergillus subgen. Nidulantes</taxon>
    </lineage>
</organism>
<dbReference type="EC" id="4.1.1.-" evidence="9"/>
<dbReference type="EMBL" id="BN001302">
    <property type="protein sequence ID" value="CBF73507.1"/>
    <property type="molecule type" value="Genomic_DNA"/>
</dbReference>
<dbReference type="EMBL" id="AACD01000135">
    <property type="protein sequence ID" value="EAA59565.1"/>
    <property type="molecule type" value="Genomic_DNA"/>
</dbReference>
<dbReference type="RefSeq" id="XP_681180.1">
    <property type="nucleotide sequence ID" value="XM_676088.1"/>
</dbReference>
<dbReference type="SMR" id="Q5AUW9"/>
<dbReference type="STRING" id="227321.Q5AUW9"/>
<dbReference type="EnsemblFungi" id="CBF73507">
    <property type="protein sequence ID" value="CBF73507"/>
    <property type="gene ID" value="ANIA_07911"/>
</dbReference>
<dbReference type="KEGG" id="ani:ANIA_07911"/>
<dbReference type="VEuPathDB" id="FungiDB:AN7911"/>
<dbReference type="eggNOG" id="KOG4245">
    <property type="taxonomic scope" value="Eukaryota"/>
</dbReference>
<dbReference type="HOGENOM" id="CLU_039329_5_1_1"/>
<dbReference type="InParanoid" id="Q5AUW9"/>
<dbReference type="OMA" id="TWASEDM"/>
<dbReference type="OrthoDB" id="432010at2759"/>
<dbReference type="Proteomes" id="UP000000560">
    <property type="component" value="Chromosome II"/>
</dbReference>
<dbReference type="GO" id="GO:0005737">
    <property type="term" value="C:cytoplasm"/>
    <property type="evidence" value="ECO:0000318"/>
    <property type="project" value="GO_Central"/>
</dbReference>
<dbReference type="GO" id="GO:0005829">
    <property type="term" value="C:cytosol"/>
    <property type="evidence" value="ECO:0000318"/>
    <property type="project" value="GO_Central"/>
</dbReference>
<dbReference type="GO" id="GO:0016831">
    <property type="term" value="F:carboxy-lyase activity"/>
    <property type="evidence" value="ECO:0007669"/>
    <property type="project" value="UniProtKB-KW"/>
</dbReference>
<dbReference type="GO" id="GO:0016787">
    <property type="term" value="F:hydrolase activity"/>
    <property type="evidence" value="ECO:0007669"/>
    <property type="project" value="InterPro"/>
</dbReference>
<dbReference type="GO" id="GO:0046872">
    <property type="term" value="F:metal ion binding"/>
    <property type="evidence" value="ECO:0007669"/>
    <property type="project" value="UniProtKB-KW"/>
</dbReference>
<dbReference type="GO" id="GO:1900611">
    <property type="term" value="P:F-9775A biosynthetic process"/>
    <property type="evidence" value="ECO:0000315"/>
    <property type="project" value="AspGD"/>
</dbReference>
<dbReference type="GO" id="GO:1900614">
    <property type="term" value="P:F-9775B biosynthetic process"/>
    <property type="evidence" value="ECO:0000315"/>
    <property type="project" value="AspGD"/>
</dbReference>
<dbReference type="GO" id="GO:0019748">
    <property type="term" value="P:secondary metabolic process"/>
    <property type="evidence" value="ECO:0000270"/>
    <property type="project" value="AspGD"/>
</dbReference>
<dbReference type="FunFam" id="3.20.20.140:FF:000099">
    <property type="entry name" value="Amidohydrolase 2"/>
    <property type="match status" value="1"/>
</dbReference>
<dbReference type="Gene3D" id="3.20.20.140">
    <property type="entry name" value="Metal-dependent hydrolases"/>
    <property type="match status" value="1"/>
</dbReference>
<dbReference type="InterPro" id="IPR032465">
    <property type="entry name" value="ACMSD"/>
</dbReference>
<dbReference type="InterPro" id="IPR006680">
    <property type="entry name" value="Amidohydro-rel"/>
</dbReference>
<dbReference type="InterPro" id="IPR032466">
    <property type="entry name" value="Metal_Hydrolase"/>
</dbReference>
<dbReference type="PANTHER" id="PTHR21240">
    <property type="entry name" value="2-AMINO-3-CARBOXYLMUCONATE-6-SEMIALDEHYDE DECARBOXYLASE"/>
    <property type="match status" value="1"/>
</dbReference>
<dbReference type="PANTHER" id="PTHR21240:SF30">
    <property type="entry name" value="AMIDOHYDROLASE-RELATED DOMAIN-CONTAINING PROTEIN-RELATED"/>
    <property type="match status" value="1"/>
</dbReference>
<dbReference type="Pfam" id="PF04909">
    <property type="entry name" value="Amidohydro_2"/>
    <property type="match status" value="1"/>
</dbReference>
<dbReference type="SUPFAM" id="SSF51556">
    <property type="entry name" value="Metallo-dependent hydrolases"/>
    <property type="match status" value="1"/>
</dbReference>
<reference key="1">
    <citation type="journal article" date="2005" name="Nature">
        <title>Sequencing of Aspergillus nidulans and comparative analysis with A. fumigatus and A. oryzae.</title>
        <authorList>
            <person name="Galagan J.E."/>
            <person name="Calvo S.E."/>
            <person name="Cuomo C."/>
            <person name="Ma L.-J."/>
            <person name="Wortman J.R."/>
            <person name="Batzoglou S."/>
            <person name="Lee S.-I."/>
            <person name="Bastuerkmen M."/>
            <person name="Spevak C.C."/>
            <person name="Clutterbuck J."/>
            <person name="Kapitonov V."/>
            <person name="Jurka J."/>
            <person name="Scazzocchio C."/>
            <person name="Farman M.L."/>
            <person name="Butler J."/>
            <person name="Purcell S."/>
            <person name="Harris S."/>
            <person name="Braus G.H."/>
            <person name="Draht O."/>
            <person name="Busch S."/>
            <person name="D'Enfert C."/>
            <person name="Bouchier C."/>
            <person name="Goldman G.H."/>
            <person name="Bell-Pedersen D."/>
            <person name="Griffiths-Jones S."/>
            <person name="Doonan J.H."/>
            <person name="Yu J."/>
            <person name="Vienken K."/>
            <person name="Pain A."/>
            <person name="Freitag M."/>
            <person name="Selker E.U."/>
            <person name="Archer D.B."/>
            <person name="Penalva M.A."/>
            <person name="Oakley B.R."/>
            <person name="Momany M."/>
            <person name="Tanaka T."/>
            <person name="Kumagai T."/>
            <person name="Asai K."/>
            <person name="Machida M."/>
            <person name="Nierman W.C."/>
            <person name="Denning D.W."/>
            <person name="Caddick M.X."/>
            <person name="Hynes M."/>
            <person name="Paoletti M."/>
            <person name="Fischer R."/>
            <person name="Miller B.L."/>
            <person name="Dyer P.S."/>
            <person name="Sachs M.S."/>
            <person name="Osmani S.A."/>
            <person name="Birren B.W."/>
        </authorList>
    </citation>
    <scope>NUCLEOTIDE SEQUENCE [LARGE SCALE GENOMIC DNA]</scope>
    <source>
        <strain>FGSC A4 / ATCC 38163 / CBS 112.46 / NRRL 194 / M139</strain>
    </source>
</reference>
<reference key="2">
    <citation type="journal article" date="2009" name="Fungal Genet. Biol.">
        <title>The 2008 update of the Aspergillus nidulans genome annotation: a community effort.</title>
        <authorList>
            <person name="Wortman J.R."/>
            <person name="Gilsenan J.M."/>
            <person name="Joardar V."/>
            <person name="Deegan J."/>
            <person name="Clutterbuck J."/>
            <person name="Andersen M.R."/>
            <person name="Archer D."/>
            <person name="Bencina M."/>
            <person name="Braus G."/>
            <person name="Coutinho P."/>
            <person name="von Dohren H."/>
            <person name="Doonan J."/>
            <person name="Driessen A.J."/>
            <person name="Durek P."/>
            <person name="Espeso E."/>
            <person name="Fekete E."/>
            <person name="Flipphi M."/>
            <person name="Estrada C.G."/>
            <person name="Geysens S."/>
            <person name="Goldman G."/>
            <person name="de Groot P.W."/>
            <person name="Hansen K."/>
            <person name="Harris S.D."/>
            <person name="Heinekamp T."/>
            <person name="Helmstaedt K."/>
            <person name="Henrissat B."/>
            <person name="Hofmann G."/>
            <person name="Homan T."/>
            <person name="Horio T."/>
            <person name="Horiuchi H."/>
            <person name="James S."/>
            <person name="Jones M."/>
            <person name="Karaffa L."/>
            <person name="Karanyi Z."/>
            <person name="Kato M."/>
            <person name="Keller N."/>
            <person name="Kelly D.E."/>
            <person name="Kiel J.A."/>
            <person name="Kim J.M."/>
            <person name="van der Klei I.J."/>
            <person name="Klis F.M."/>
            <person name="Kovalchuk A."/>
            <person name="Krasevec N."/>
            <person name="Kubicek C.P."/>
            <person name="Liu B."/>
            <person name="Maccabe A."/>
            <person name="Meyer V."/>
            <person name="Mirabito P."/>
            <person name="Miskei M."/>
            <person name="Mos M."/>
            <person name="Mullins J."/>
            <person name="Nelson D.R."/>
            <person name="Nielsen J."/>
            <person name="Oakley B.R."/>
            <person name="Osmani S.A."/>
            <person name="Pakula T."/>
            <person name="Paszewski A."/>
            <person name="Paulsen I."/>
            <person name="Pilsyk S."/>
            <person name="Pocsi I."/>
            <person name="Punt P.J."/>
            <person name="Ram A.F."/>
            <person name="Ren Q."/>
            <person name="Robellet X."/>
            <person name="Robson G."/>
            <person name="Seiboth B."/>
            <person name="van Solingen P."/>
            <person name="Specht T."/>
            <person name="Sun J."/>
            <person name="Taheri-Talesh N."/>
            <person name="Takeshita N."/>
            <person name="Ussery D."/>
            <person name="vanKuyk P.A."/>
            <person name="Visser H."/>
            <person name="van de Vondervoort P.J."/>
            <person name="de Vries R.P."/>
            <person name="Walton J."/>
            <person name="Xiang X."/>
            <person name="Xiong Y."/>
            <person name="Zeng A.P."/>
            <person name="Brandt B.W."/>
            <person name="Cornell M.J."/>
            <person name="van den Hondel C.A."/>
            <person name="Visser J."/>
            <person name="Oliver S.G."/>
            <person name="Turner G."/>
        </authorList>
    </citation>
    <scope>GENOME REANNOTATION</scope>
    <source>
        <strain>FGSC A4 / ATCC 38163 / CBS 112.46 / NRRL 194 / M139</strain>
    </source>
</reference>
<reference key="3">
    <citation type="journal article" date="2009" name="Proc. Natl. Acad. Sci. U.S.A.">
        <title>Intimate bacterial-fungal interaction triggers biosynthesis of archetypal polyketides in Aspergillus nidulans.</title>
        <authorList>
            <person name="Schroeckh V."/>
            <person name="Scherlach K."/>
            <person name="Nuetzmann H.W."/>
            <person name="Shelest E."/>
            <person name="Schmidt-Heck W."/>
            <person name="Schuemann J."/>
            <person name="Martin K."/>
            <person name="Hertweck C."/>
            <person name="Brakhage A.A."/>
        </authorList>
    </citation>
    <scope>IDENTIFICATION OF THE ORS CLUSTER</scope>
    <scope>FUNCTION</scope>
    <scope>INDUCTION</scope>
</reference>
<reference key="4">
    <citation type="journal article" date="2010" name="Mol. Biosyst.">
        <title>Molecular genetic analysis of the orsellinic acid/F9775 gene cluster of Aspergillus nidulans.</title>
        <authorList>
            <person name="Sanchez J.F."/>
            <person name="Chiang Y.M."/>
            <person name="Szewczyk E."/>
            <person name="Davidson A.D."/>
            <person name="Ahuja M."/>
            <person name="Elizabeth Oakley C."/>
            <person name="Woo Bok J."/>
            <person name="Keller N."/>
            <person name="Oakley B.R."/>
            <person name="Wang C.C."/>
        </authorList>
    </citation>
    <scope>FUNCTION</scope>
    <scope>DISRUPTION PHENOTYPE</scope>
    <scope>PATHWAY</scope>
</reference>
<reference key="5">
    <citation type="journal article" date="2013" name="Appl. Environ. Microbiol.">
        <title>Distinct amino acids of histone H3 control secondary metabolism in Aspergillus nidulans.</title>
        <authorList>
            <person name="Nuetzmann H.W."/>
            <person name="Fischer J."/>
            <person name="Scherlach K."/>
            <person name="Hertweck C."/>
            <person name="Brakhage A.A."/>
        </authorList>
    </citation>
    <scope>INDUCTION</scope>
</reference>
<reference key="6">
    <citation type="journal article" date="2013" name="Mol. Microbiol.">
        <title>VeA and MvlA repression of the cryptic orsellinic acid gene cluster in Aspergillus nidulans involves histone 3 acetylation.</title>
        <authorList>
            <person name="Bok J.W."/>
            <person name="Soukup A.A."/>
            <person name="Chadwick E."/>
            <person name="Chiang Y.M."/>
            <person name="Wang C.C."/>
            <person name="Keller N.P."/>
        </authorList>
    </citation>
    <scope>INDUCTION</scope>
</reference>
<protein>
    <recommendedName>
        <fullName evidence="7">Decarboxylase orsB</fullName>
        <ecNumber evidence="9">4.1.1.-</ecNumber>
    </recommendedName>
    <alternativeName>
        <fullName evidence="6">Orsellinic acid/F9775 biosynthesis cluster protein B</fullName>
    </alternativeName>
</protein>
<accession>Q5AUW9</accession>
<accession>C8V4V1</accession>